<proteinExistence type="inferred from homology"/>
<reference key="1">
    <citation type="submission" date="2005-09" db="EMBL/GenBank/DDBJ databases">
        <title>Complete sequence of chromosome 1 of Rhodobacter sphaeroides 2.4.1.</title>
        <authorList>
            <person name="Copeland A."/>
            <person name="Lucas S."/>
            <person name="Lapidus A."/>
            <person name="Barry K."/>
            <person name="Detter J.C."/>
            <person name="Glavina T."/>
            <person name="Hammon N."/>
            <person name="Israni S."/>
            <person name="Pitluck S."/>
            <person name="Richardson P."/>
            <person name="Mackenzie C."/>
            <person name="Choudhary M."/>
            <person name="Larimer F."/>
            <person name="Hauser L.J."/>
            <person name="Land M."/>
            <person name="Donohue T.J."/>
            <person name="Kaplan S."/>
        </authorList>
    </citation>
    <scope>NUCLEOTIDE SEQUENCE [LARGE SCALE GENOMIC DNA]</scope>
    <source>
        <strain>ATCC 17023 / DSM 158 / JCM 6121 / CCUG 31486 / LMG 2827 / NBRC 12203 / NCIMB 8253 / ATH 2.4.1.</strain>
    </source>
</reference>
<feature type="chain" id="PRO_0000241825" description="UPF0178 protein RHOS4_24670">
    <location>
        <begin position="1"/>
        <end position="162"/>
    </location>
</feature>
<organism>
    <name type="scientific">Cereibacter sphaeroides (strain ATCC 17023 / DSM 158 / JCM 6121 / CCUG 31486 / LMG 2827 / NBRC 12203 / NCIMB 8253 / ATH 2.4.1.)</name>
    <name type="common">Rhodobacter sphaeroides</name>
    <dbReference type="NCBI Taxonomy" id="272943"/>
    <lineage>
        <taxon>Bacteria</taxon>
        <taxon>Pseudomonadati</taxon>
        <taxon>Pseudomonadota</taxon>
        <taxon>Alphaproteobacteria</taxon>
        <taxon>Rhodobacterales</taxon>
        <taxon>Paracoccaceae</taxon>
        <taxon>Cereibacter</taxon>
    </lineage>
</organism>
<name>Y2467_CERS4</name>
<sequence>MTDLYIDADACPVKAEAERVAVRHGVRMFLVSNGGIRPPAHPLVESIFVPEGPDVADMWIADRARTGDVVVTSDIPLAAKVVAAGALVVKPNGETLTQANIGNALATRDLMADLRSADPFRQGGGRPFSKADRSRFLDALERAMRKAQEAGRSASGGNEAGS</sequence>
<dbReference type="EMBL" id="CP000143">
    <property type="protein sequence ID" value="ABA80035.1"/>
    <property type="molecule type" value="Genomic_DNA"/>
</dbReference>
<dbReference type="RefSeq" id="WP_011338542.1">
    <property type="nucleotide sequence ID" value="NC_007493.2"/>
</dbReference>
<dbReference type="RefSeq" id="YP_353936.1">
    <property type="nucleotide sequence ID" value="NC_007493.2"/>
</dbReference>
<dbReference type="STRING" id="272943.RSP_0853"/>
<dbReference type="EnsemblBacteria" id="ABA80035">
    <property type="protein sequence ID" value="ABA80035"/>
    <property type="gene ID" value="RSP_0853"/>
</dbReference>
<dbReference type="GeneID" id="3718319"/>
<dbReference type="KEGG" id="rsp:RSP_0853"/>
<dbReference type="PATRIC" id="fig|272943.9.peg.2817"/>
<dbReference type="eggNOG" id="COG1671">
    <property type="taxonomic scope" value="Bacteria"/>
</dbReference>
<dbReference type="OrthoDB" id="9798918at2"/>
<dbReference type="PhylomeDB" id="Q3IZJ9"/>
<dbReference type="Proteomes" id="UP000002703">
    <property type="component" value="Chromosome 1"/>
</dbReference>
<dbReference type="HAMAP" id="MF_00489">
    <property type="entry name" value="UPF0178"/>
    <property type="match status" value="1"/>
</dbReference>
<dbReference type="InterPro" id="IPR003791">
    <property type="entry name" value="UPF0178"/>
</dbReference>
<dbReference type="NCBIfam" id="NF001095">
    <property type="entry name" value="PRK00124.1"/>
    <property type="match status" value="1"/>
</dbReference>
<dbReference type="PANTHER" id="PTHR35146">
    <property type="entry name" value="UPF0178 PROTEIN YAII"/>
    <property type="match status" value="1"/>
</dbReference>
<dbReference type="PANTHER" id="PTHR35146:SF1">
    <property type="entry name" value="UPF0178 PROTEIN YAII"/>
    <property type="match status" value="1"/>
</dbReference>
<dbReference type="Pfam" id="PF02639">
    <property type="entry name" value="DUF188"/>
    <property type="match status" value="1"/>
</dbReference>
<keyword id="KW-1185">Reference proteome</keyword>
<comment type="similarity">
    <text evidence="1">Belongs to the UPF0178 family.</text>
</comment>
<accession>Q3IZJ9</accession>
<evidence type="ECO:0000255" key="1">
    <source>
        <dbReference type="HAMAP-Rule" id="MF_00489"/>
    </source>
</evidence>
<gene>
    <name type="ordered locus">RHOS4_24670</name>
    <name type="ORF">RSP_0853</name>
</gene>
<protein>
    <recommendedName>
        <fullName evidence="1">UPF0178 protein RHOS4_24670</fullName>
    </recommendedName>
</protein>